<accession>Q9ZBQ7</accession>
<sequence>MRGTVSVPKKAEDAKADPPAKKKADTQASSHTLLEGRLGYQLESALLVRALTHRSYAYENGGLPTNERLEFLGDSVLGLVVTDTLYRTHPDLPEGQLAKLRAAVVNSRALAEVGRGLELGSFIRLGRGEEGTGGRDKASILADTLEAVIGAVYLDQGLDAASELVHRLFDPLIEKSSNLGAGLDWKTSLQELTATEGLGVPEYLVTETGPDHEKTFTAAARVGGVSYGTGTGRSKKEAEQQAAESAWRSIRAAADERAKATADAVDADPDEASASA</sequence>
<protein>
    <recommendedName>
        <fullName>Ribonuclease 3</fullName>
        <ecNumber>3.1.26.3</ecNumber>
    </recommendedName>
    <alternativeName>
        <fullName>Antibiotic biosynthesis protein B</fullName>
        <shortName>AbsB</shortName>
    </alternativeName>
    <alternativeName>
        <fullName>Ribonuclease III</fullName>
        <shortName>RNase III</shortName>
    </alternativeName>
</protein>
<comment type="function">
    <text evidence="4 5 6">Digests double-stranded RNA. Involved in the processing of primary rRNA transcript to yield the immediate precursors to the large and small rRNAs (23S and 16S). Also processes some mRNAs, and tRNAs when they are encoded in the rRNA operon. May modulate key aspects of gene expression as its absence has extensive effects on the abundance of about 200 different transcripts. Probably processes pre-crRNA and tracrRNA of type II CRISPR loci if present in the organism.</text>
</comment>
<comment type="catalytic activity">
    <reaction>
        <text>Endonucleolytic cleavage to 5'-phosphomonoester.</text>
        <dbReference type="EC" id="3.1.26.3"/>
    </reaction>
</comment>
<comment type="cofactor">
    <cofactor evidence="1">
        <name>Mg(2+)</name>
        <dbReference type="ChEBI" id="CHEBI:18420"/>
    </cofactor>
</comment>
<comment type="subunit">
    <text evidence="1">Homodimer.</text>
</comment>
<comment type="subcellular location">
    <subcellularLocation>
        <location evidence="1">Cytoplasm</location>
    </subcellularLocation>
</comment>
<comment type="disruption phenotype">
    <text evidence="4 6">Not essential. Deficient in endogenous antibiotic synthesis, able to form a sporulating aerial mycelium. Accumulates a 30S rRNA precursor transcript. Leads to increased expression of pnp due to increased transcript levels.</text>
</comment>
<comment type="similarity">
    <text evidence="7">Belongs to the ribonuclease III family.</text>
</comment>
<comment type="sequence caution" evidence="7">
    <conflict type="erroneous initiation">
        <sequence resource="EMBL-CDS" id="CAA22415"/>
    </conflict>
    <text>Truncated N-terminus.</text>
</comment>
<name>RNC_STRCO</name>
<reference key="1">
    <citation type="journal article" date="1999" name="J. Bacteriol.">
        <title>A Streptomyces coelicolor antibiotic regulatory gene, absB, encodes an RNase III homolog.</title>
        <authorList>
            <person name="Price B."/>
            <person name="Adamidis T."/>
            <person name="Kong R."/>
            <person name="Champness W."/>
        </authorList>
    </citation>
    <scope>NUCLEOTIDE SEQUENCE [GENOMIC DNA]</scope>
    <scope>FUNCTION IN PROCESSING OF RRNA</scope>
    <scope>DISRUPTION PHENOTYPE</scope>
    <scope>MUTAGENESIS OF LEU-172</scope>
    <source>
        <strain>ATCC BAA-471 / A3(2) / M145</strain>
    </source>
</reference>
<reference key="2">
    <citation type="journal article" date="2002" name="Nature">
        <title>Complete genome sequence of the model actinomycete Streptomyces coelicolor A3(2).</title>
        <authorList>
            <person name="Bentley S.D."/>
            <person name="Chater K.F."/>
            <person name="Cerdeno-Tarraga A.-M."/>
            <person name="Challis G.L."/>
            <person name="Thomson N.R."/>
            <person name="James K.D."/>
            <person name="Harris D.E."/>
            <person name="Quail M.A."/>
            <person name="Kieser H."/>
            <person name="Harper D."/>
            <person name="Bateman A."/>
            <person name="Brown S."/>
            <person name="Chandra G."/>
            <person name="Chen C.W."/>
            <person name="Collins M."/>
            <person name="Cronin A."/>
            <person name="Fraser A."/>
            <person name="Goble A."/>
            <person name="Hidalgo J."/>
            <person name="Hornsby T."/>
            <person name="Howarth S."/>
            <person name="Huang C.-H."/>
            <person name="Kieser T."/>
            <person name="Larke L."/>
            <person name="Murphy L.D."/>
            <person name="Oliver K."/>
            <person name="O'Neil S."/>
            <person name="Rabbinowitsch E."/>
            <person name="Rajandream M.A."/>
            <person name="Rutherford K.M."/>
            <person name="Rutter S."/>
            <person name="Seeger K."/>
            <person name="Saunders D."/>
            <person name="Sharp S."/>
            <person name="Squares R."/>
            <person name="Squares S."/>
            <person name="Taylor K."/>
            <person name="Warren T."/>
            <person name="Wietzorrek A."/>
            <person name="Woodward J.R."/>
            <person name="Barrell B.G."/>
            <person name="Parkhill J."/>
            <person name="Hopwood D.A."/>
        </authorList>
    </citation>
    <scope>NUCLEOTIDE SEQUENCE [LARGE SCALE GENOMIC DNA]</scope>
    <source>
        <strain>ATCC BAA-471 / A3(2) / M145</strain>
    </source>
</reference>
<reference key="3">
    <citation type="journal article" date="2005" name="Mol. Microbiol.">
        <title>Cross-regulation among disparate antibiotic biosynthetic pathways of Streptomyces coelicolor.</title>
        <authorList>
            <person name="Huang J."/>
            <person name="Shi J."/>
            <person name="Molle V."/>
            <person name="Sohlberg B."/>
            <person name="Weaver D."/>
            <person name="Bibb M.J."/>
            <person name="Karoonuthaisiri N."/>
            <person name="Lih C.J."/>
            <person name="Kao C.M."/>
            <person name="Buttner M.J."/>
            <person name="Cohen S.N."/>
        </authorList>
    </citation>
    <scope>ROLE IN GLOBAL GENE REGULATION</scope>
    <scope>MUTAGENESIS OF LEU-172</scope>
    <source>
        <strain>ATCC BAA-471 / A3(2) / M145</strain>
    </source>
</reference>
<reference key="4">
    <citation type="journal article" date="2011" name="J. Bacteriol.">
        <title>RNase III-dependent expression of the rpsO-pnp operon of Streptomyces coelicolor.</title>
        <authorList>
            <person name="Gatewood M.L."/>
            <person name="Bralley P."/>
            <person name="Jones G.H."/>
        </authorList>
    </citation>
    <scope>FUNCTION AS AN ENDORIBONUCLEASE</scope>
    <scope>FUNCTION IN PROCESSING OF MRNA</scope>
    <scope>DISRUPTION PHENOTYPE</scope>
    <source>
        <strain>ATCC BAA-471 / A3(2) / M145</strain>
    </source>
</reference>
<gene>
    <name type="primary">rnc</name>
    <name type="synonym">absB</name>
    <name type="ordered locus">SCO5572</name>
    <name type="ORF">SC7A1.16</name>
</gene>
<proteinExistence type="evidence at protein level"/>
<feature type="chain" id="PRO_0000180440" description="Ribonuclease 3">
    <location>
        <begin position="1"/>
        <end position="276"/>
    </location>
</feature>
<feature type="domain" description="RNase III">
    <location>
        <begin position="31"/>
        <end position="157"/>
    </location>
</feature>
<feature type="domain" description="DRBM">
    <location>
        <begin position="184"/>
        <end position="252"/>
    </location>
</feature>
<feature type="region of interest" description="Disordered" evidence="3">
    <location>
        <begin position="1"/>
        <end position="29"/>
    </location>
</feature>
<feature type="region of interest" description="Disordered" evidence="3">
    <location>
        <begin position="227"/>
        <end position="276"/>
    </location>
</feature>
<feature type="compositionally biased region" description="Basic and acidic residues" evidence="3">
    <location>
        <begin position="9"/>
        <end position="25"/>
    </location>
</feature>
<feature type="compositionally biased region" description="Acidic residues" evidence="3">
    <location>
        <begin position="265"/>
        <end position="276"/>
    </location>
</feature>
<feature type="active site" evidence="2">
    <location>
        <position position="74"/>
    </location>
</feature>
<feature type="active site" evidence="1">
    <location>
        <position position="146"/>
    </location>
</feature>
<feature type="binding site" evidence="1">
    <location>
        <position position="70"/>
    </location>
    <ligand>
        <name>Mg(2+)</name>
        <dbReference type="ChEBI" id="CHEBI:18420"/>
    </ligand>
</feature>
<feature type="binding site" evidence="1">
    <location>
        <position position="143"/>
    </location>
    <ligand>
        <name>Mg(2+)</name>
        <dbReference type="ChEBI" id="CHEBI:18420"/>
    </ligand>
</feature>
<feature type="binding site" evidence="1">
    <location>
        <position position="146"/>
    </location>
    <ligand>
        <name>Mg(2+)</name>
        <dbReference type="ChEBI" id="CHEBI:18420"/>
    </ligand>
</feature>
<feature type="mutagenesis site" description="In strain C120; loss of endogenous antibiotic synthesis, decrease in transcript abundance of genes involved in secondary metabolism." evidence="4 5">
    <original>L</original>
    <variation>P</variation>
    <location>
        <position position="172"/>
    </location>
</feature>
<evidence type="ECO:0000250" key="1"/>
<evidence type="ECO:0000255" key="2"/>
<evidence type="ECO:0000256" key="3">
    <source>
        <dbReference type="SAM" id="MobiDB-lite"/>
    </source>
</evidence>
<evidence type="ECO:0000269" key="4">
    <source>
    </source>
</evidence>
<evidence type="ECO:0000269" key="5">
    <source>
    </source>
</evidence>
<evidence type="ECO:0000269" key="6">
    <source>
    </source>
</evidence>
<evidence type="ECO:0000305" key="7"/>
<dbReference type="EC" id="3.1.26.3"/>
<dbReference type="EMBL" id="AL939124">
    <property type="protein sequence ID" value="CAA22415.1"/>
    <property type="status" value="ALT_INIT"/>
    <property type="molecule type" value="Genomic_DNA"/>
</dbReference>
<dbReference type="PIR" id="T35656">
    <property type="entry name" value="T35656"/>
</dbReference>
<dbReference type="RefSeq" id="NP_629707.1">
    <property type="nucleotide sequence ID" value="NC_003888.3"/>
</dbReference>
<dbReference type="RefSeq" id="WP_003973423.1">
    <property type="nucleotide sequence ID" value="NZ_VNID01000011.1"/>
</dbReference>
<dbReference type="SMR" id="Q9ZBQ7"/>
<dbReference type="FunCoup" id="Q9ZBQ7">
    <property type="interactions" value="48"/>
</dbReference>
<dbReference type="STRING" id="100226.gene:17763230"/>
<dbReference type="PaxDb" id="100226-SCO5572"/>
<dbReference type="GeneID" id="97462055"/>
<dbReference type="KEGG" id="sco:SCO5572"/>
<dbReference type="PATRIC" id="fig|100226.15.peg.5661"/>
<dbReference type="eggNOG" id="COG0571">
    <property type="taxonomic scope" value="Bacteria"/>
</dbReference>
<dbReference type="HOGENOM" id="CLU_000907_1_2_11"/>
<dbReference type="InParanoid" id="Q9ZBQ7"/>
<dbReference type="OrthoDB" id="9805026at2"/>
<dbReference type="BRENDA" id="3.1.26.3">
    <property type="organism ID" value="5998"/>
</dbReference>
<dbReference type="Proteomes" id="UP000001973">
    <property type="component" value="Chromosome"/>
</dbReference>
<dbReference type="GO" id="GO:0005829">
    <property type="term" value="C:cytosol"/>
    <property type="evidence" value="ECO:0000318"/>
    <property type="project" value="GO_Central"/>
</dbReference>
<dbReference type="GO" id="GO:0003725">
    <property type="term" value="F:double-stranded RNA binding"/>
    <property type="evidence" value="ECO:0000318"/>
    <property type="project" value="GO_Central"/>
</dbReference>
<dbReference type="GO" id="GO:0046872">
    <property type="term" value="F:metal ion binding"/>
    <property type="evidence" value="ECO:0007669"/>
    <property type="project" value="UniProtKB-KW"/>
</dbReference>
<dbReference type="GO" id="GO:0004525">
    <property type="term" value="F:ribonuclease III activity"/>
    <property type="evidence" value="ECO:0000318"/>
    <property type="project" value="GO_Central"/>
</dbReference>
<dbReference type="GO" id="GO:0019843">
    <property type="term" value="F:rRNA binding"/>
    <property type="evidence" value="ECO:0007669"/>
    <property type="project" value="UniProtKB-KW"/>
</dbReference>
<dbReference type="GO" id="GO:0006397">
    <property type="term" value="P:mRNA processing"/>
    <property type="evidence" value="ECO:0007669"/>
    <property type="project" value="UniProtKB-UniRule"/>
</dbReference>
<dbReference type="GO" id="GO:0010468">
    <property type="term" value="P:regulation of gene expression"/>
    <property type="evidence" value="ECO:0000318"/>
    <property type="project" value="GO_Central"/>
</dbReference>
<dbReference type="GO" id="GO:0006396">
    <property type="term" value="P:RNA processing"/>
    <property type="evidence" value="ECO:0000318"/>
    <property type="project" value="GO_Central"/>
</dbReference>
<dbReference type="GO" id="GO:0006364">
    <property type="term" value="P:rRNA processing"/>
    <property type="evidence" value="ECO:0007669"/>
    <property type="project" value="UniProtKB-UniRule"/>
</dbReference>
<dbReference type="GO" id="GO:0008033">
    <property type="term" value="P:tRNA processing"/>
    <property type="evidence" value="ECO:0007669"/>
    <property type="project" value="UniProtKB-KW"/>
</dbReference>
<dbReference type="CDD" id="cd10845">
    <property type="entry name" value="DSRM_RNAse_III_family"/>
    <property type="match status" value="1"/>
</dbReference>
<dbReference type="CDD" id="cd00593">
    <property type="entry name" value="RIBOc"/>
    <property type="match status" value="1"/>
</dbReference>
<dbReference type="FunFam" id="1.10.1520.10:FF:000001">
    <property type="entry name" value="Ribonuclease 3"/>
    <property type="match status" value="1"/>
</dbReference>
<dbReference type="FunFam" id="3.30.160.20:FF:000003">
    <property type="entry name" value="Ribonuclease 3"/>
    <property type="match status" value="1"/>
</dbReference>
<dbReference type="Gene3D" id="3.30.160.20">
    <property type="match status" value="1"/>
</dbReference>
<dbReference type="Gene3D" id="1.10.1520.10">
    <property type="entry name" value="Ribonuclease III domain"/>
    <property type="match status" value="1"/>
</dbReference>
<dbReference type="HAMAP" id="MF_00104">
    <property type="entry name" value="RNase_III"/>
    <property type="match status" value="1"/>
</dbReference>
<dbReference type="InterPro" id="IPR014720">
    <property type="entry name" value="dsRBD_dom"/>
</dbReference>
<dbReference type="InterPro" id="IPR011907">
    <property type="entry name" value="RNase_III"/>
</dbReference>
<dbReference type="InterPro" id="IPR000999">
    <property type="entry name" value="RNase_III_dom"/>
</dbReference>
<dbReference type="InterPro" id="IPR036389">
    <property type="entry name" value="RNase_III_sf"/>
</dbReference>
<dbReference type="NCBIfam" id="TIGR02191">
    <property type="entry name" value="RNaseIII"/>
    <property type="match status" value="1"/>
</dbReference>
<dbReference type="PANTHER" id="PTHR11207:SF0">
    <property type="entry name" value="RIBONUCLEASE 3"/>
    <property type="match status" value="1"/>
</dbReference>
<dbReference type="PANTHER" id="PTHR11207">
    <property type="entry name" value="RIBONUCLEASE III"/>
    <property type="match status" value="1"/>
</dbReference>
<dbReference type="Pfam" id="PF00035">
    <property type="entry name" value="dsrm"/>
    <property type="match status" value="1"/>
</dbReference>
<dbReference type="Pfam" id="PF14622">
    <property type="entry name" value="Ribonucleas_3_3"/>
    <property type="match status" value="1"/>
</dbReference>
<dbReference type="SMART" id="SM00358">
    <property type="entry name" value="DSRM"/>
    <property type="match status" value="1"/>
</dbReference>
<dbReference type="SMART" id="SM00535">
    <property type="entry name" value="RIBOc"/>
    <property type="match status" value="1"/>
</dbReference>
<dbReference type="SUPFAM" id="SSF54768">
    <property type="entry name" value="dsRNA-binding domain-like"/>
    <property type="match status" value="1"/>
</dbReference>
<dbReference type="SUPFAM" id="SSF69065">
    <property type="entry name" value="RNase III domain-like"/>
    <property type="match status" value="1"/>
</dbReference>
<dbReference type="PROSITE" id="PS50137">
    <property type="entry name" value="DS_RBD"/>
    <property type="match status" value="1"/>
</dbReference>
<dbReference type="PROSITE" id="PS00517">
    <property type="entry name" value="RNASE_3_1"/>
    <property type="match status" value="1"/>
</dbReference>
<dbReference type="PROSITE" id="PS50142">
    <property type="entry name" value="RNASE_3_2"/>
    <property type="match status" value="1"/>
</dbReference>
<organism>
    <name type="scientific">Streptomyces coelicolor (strain ATCC BAA-471 / A3(2) / M145)</name>
    <dbReference type="NCBI Taxonomy" id="100226"/>
    <lineage>
        <taxon>Bacteria</taxon>
        <taxon>Bacillati</taxon>
        <taxon>Actinomycetota</taxon>
        <taxon>Actinomycetes</taxon>
        <taxon>Kitasatosporales</taxon>
        <taxon>Streptomycetaceae</taxon>
        <taxon>Streptomyces</taxon>
        <taxon>Streptomyces albidoflavus group</taxon>
    </lineage>
</organism>
<keyword id="KW-0963">Cytoplasm</keyword>
<keyword id="KW-0255">Endonuclease</keyword>
<keyword id="KW-0378">Hydrolase</keyword>
<keyword id="KW-0460">Magnesium</keyword>
<keyword id="KW-0479">Metal-binding</keyword>
<keyword id="KW-0507">mRNA processing</keyword>
<keyword id="KW-0540">Nuclease</keyword>
<keyword id="KW-1185">Reference proteome</keyword>
<keyword id="KW-0694">RNA-binding</keyword>
<keyword id="KW-0698">rRNA processing</keyword>
<keyword id="KW-0699">rRNA-binding</keyword>
<keyword id="KW-0819">tRNA processing</keyword>